<reference key="1">
    <citation type="submission" date="2007-10" db="EMBL/GenBank/DDBJ databases">
        <title>Genome sequence of Campylobacter concisus 13826 isolated from human feces.</title>
        <authorList>
            <person name="Fouts D.E."/>
            <person name="Mongodin E.F."/>
            <person name="Puiu D."/>
            <person name="Sebastian Y."/>
            <person name="Miller W.G."/>
            <person name="Mandrell R.E."/>
            <person name="On S."/>
            <person name="Nelson K.E."/>
        </authorList>
    </citation>
    <scope>NUCLEOTIDE SEQUENCE [LARGE SCALE GENOMIC DNA]</scope>
    <source>
        <strain>13826</strain>
    </source>
</reference>
<gene>
    <name evidence="1" type="primary">rplS</name>
    <name type="ordered locus">Ccon26_11260</name>
    <name type="ORF">CCC13826_1429</name>
</gene>
<protein>
    <recommendedName>
        <fullName evidence="1">Large ribosomal subunit protein bL19</fullName>
    </recommendedName>
    <alternativeName>
        <fullName evidence="2">50S ribosomal protein L19</fullName>
    </alternativeName>
</protein>
<sequence>MRNKYIEAFENAQIAGKNIPDFRAGDTLRVATRIHEGDKTRIQNFEGICIARRGSGTGETFIIRKIGANSVGVERIFPIFSDSIEEIKVLRKGRVRRAKLFYLRELRGKAAKIRELRK</sequence>
<accession>A7ZDX6</accession>
<comment type="function">
    <text evidence="1">This protein is located at the 30S-50S ribosomal subunit interface and may play a role in the structure and function of the aminoacyl-tRNA binding site.</text>
</comment>
<comment type="similarity">
    <text evidence="1">Belongs to the bacterial ribosomal protein bL19 family.</text>
</comment>
<dbReference type="EMBL" id="CP000792">
    <property type="protein sequence ID" value="EAT98305.1"/>
    <property type="molecule type" value="Genomic_DNA"/>
</dbReference>
<dbReference type="RefSeq" id="WP_002941851.1">
    <property type="nucleotide sequence ID" value="NC_009802.2"/>
</dbReference>
<dbReference type="SMR" id="A7ZDX6"/>
<dbReference type="STRING" id="360104.CCC13826_1429"/>
<dbReference type="KEGG" id="cco:CCC13826_1429"/>
<dbReference type="eggNOG" id="COG0335">
    <property type="taxonomic scope" value="Bacteria"/>
</dbReference>
<dbReference type="HOGENOM" id="CLU_103507_2_2_7"/>
<dbReference type="OrthoDB" id="9803541at2"/>
<dbReference type="Proteomes" id="UP000001121">
    <property type="component" value="Chromosome"/>
</dbReference>
<dbReference type="GO" id="GO:0022625">
    <property type="term" value="C:cytosolic large ribosomal subunit"/>
    <property type="evidence" value="ECO:0007669"/>
    <property type="project" value="TreeGrafter"/>
</dbReference>
<dbReference type="GO" id="GO:0003735">
    <property type="term" value="F:structural constituent of ribosome"/>
    <property type="evidence" value="ECO:0007669"/>
    <property type="project" value="InterPro"/>
</dbReference>
<dbReference type="GO" id="GO:0006412">
    <property type="term" value="P:translation"/>
    <property type="evidence" value="ECO:0007669"/>
    <property type="project" value="UniProtKB-UniRule"/>
</dbReference>
<dbReference type="FunFam" id="2.30.30.790:FF:000001">
    <property type="entry name" value="50S ribosomal protein L19"/>
    <property type="match status" value="1"/>
</dbReference>
<dbReference type="Gene3D" id="2.30.30.790">
    <property type="match status" value="1"/>
</dbReference>
<dbReference type="HAMAP" id="MF_00402">
    <property type="entry name" value="Ribosomal_bL19"/>
    <property type="match status" value="1"/>
</dbReference>
<dbReference type="InterPro" id="IPR001857">
    <property type="entry name" value="Ribosomal_bL19"/>
</dbReference>
<dbReference type="InterPro" id="IPR018257">
    <property type="entry name" value="Ribosomal_bL19_CS"/>
</dbReference>
<dbReference type="InterPro" id="IPR038657">
    <property type="entry name" value="Ribosomal_bL19_sf"/>
</dbReference>
<dbReference type="InterPro" id="IPR008991">
    <property type="entry name" value="Translation_prot_SH3-like_sf"/>
</dbReference>
<dbReference type="NCBIfam" id="TIGR01024">
    <property type="entry name" value="rplS_bact"/>
    <property type="match status" value="1"/>
</dbReference>
<dbReference type="PANTHER" id="PTHR15680:SF9">
    <property type="entry name" value="LARGE RIBOSOMAL SUBUNIT PROTEIN BL19M"/>
    <property type="match status" value="1"/>
</dbReference>
<dbReference type="PANTHER" id="PTHR15680">
    <property type="entry name" value="RIBOSOMAL PROTEIN L19"/>
    <property type="match status" value="1"/>
</dbReference>
<dbReference type="Pfam" id="PF01245">
    <property type="entry name" value="Ribosomal_L19"/>
    <property type="match status" value="1"/>
</dbReference>
<dbReference type="PIRSF" id="PIRSF002191">
    <property type="entry name" value="Ribosomal_L19"/>
    <property type="match status" value="1"/>
</dbReference>
<dbReference type="PRINTS" id="PR00061">
    <property type="entry name" value="RIBOSOMALL19"/>
</dbReference>
<dbReference type="SUPFAM" id="SSF50104">
    <property type="entry name" value="Translation proteins SH3-like domain"/>
    <property type="match status" value="1"/>
</dbReference>
<dbReference type="PROSITE" id="PS01015">
    <property type="entry name" value="RIBOSOMAL_L19"/>
    <property type="match status" value="1"/>
</dbReference>
<organism>
    <name type="scientific">Campylobacter concisus (strain 13826)</name>
    <dbReference type="NCBI Taxonomy" id="360104"/>
    <lineage>
        <taxon>Bacteria</taxon>
        <taxon>Pseudomonadati</taxon>
        <taxon>Campylobacterota</taxon>
        <taxon>Epsilonproteobacteria</taxon>
        <taxon>Campylobacterales</taxon>
        <taxon>Campylobacteraceae</taxon>
        <taxon>Campylobacter</taxon>
    </lineage>
</organism>
<evidence type="ECO:0000255" key="1">
    <source>
        <dbReference type="HAMAP-Rule" id="MF_00402"/>
    </source>
</evidence>
<evidence type="ECO:0000305" key="2"/>
<feature type="chain" id="PRO_1000049651" description="Large ribosomal subunit protein bL19">
    <location>
        <begin position="1"/>
        <end position="118"/>
    </location>
</feature>
<name>RL19_CAMC1</name>
<proteinExistence type="inferred from homology"/>
<keyword id="KW-0687">Ribonucleoprotein</keyword>
<keyword id="KW-0689">Ribosomal protein</keyword>